<name>Y2450_STAHJ</name>
<dbReference type="EMBL" id="AP006716">
    <property type="protein sequence ID" value="BAE05759.1"/>
    <property type="molecule type" value="Genomic_DNA"/>
</dbReference>
<dbReference type="RefSeq" id="WP_011276704.1">
    <property type="nucleotide sequence ID" value="NC_007168.1"/>
</dbReference>
<dbReference type="SMR" id="Q4L3L8"/>
<dbReference type="KEGG" id="sha:SH2450"/>
<dbReference type="eggNOG" id="COG0451">
    <property type="taxonomic scope" value="Bacteria"/>
</dbReference>
<dbReference type="HOGENOM" id="CLU_007383_19_1_9"/>
<dbReference type="OrthoDB" id="9779902at2"/>
<dbReference type="Proteomes" id="UP000000543">
    <property type="component" value="Chromosome"/>
</dbReference>
<dbReference type="GO" id="GO:0008743">
    <property type="term" value="F:L-threonine 3-dehydrogenase activity"/>
    <property type="evidence" value="ECO:0007669"/>
    <property type="project" value="TreeGrafter"/>
</dbReference>
<dbReference type="GO" id="GO:0006567">
    <property type="term" value="P:threonine catabolic process"/>
    <property type="evidence" value="ECO:0007669"/>
    <property type="project" value="TreeGrafter"/>
</dbReference>
<dbReference type="CDD" id="cd05272">
    <property type="entry name" value="TDH_SDR_e"/>
    <property type="match status" value="1"/>
</dbReference>
<dbReference type="FunFam" id="3.40.50.720:FF:000077">
    <property type="entry name" value="L-threonine 3-dehydrogenase, mitochondrial"/>
    <property type="match status" value="1"/>
</dbReference>
<dbReference type="Gene3D" id="3.40.50.720">
    <property type="entry name" value="NAD(P)-binding Rossmann-like Domain"/>
    <property type="match status" value="1"/>
</dbReference>
<dbReference type="InterPro" id="IPR001509">
    <property type="entry name" value="Epimerase_deHydtase"/>
</dbReference>
<dbReference type="InterPro" id="IPR036291">
    <property type="entry name" value="NAD(P)-bd_dom_sf"/>
</dbReference>
<dbReference type="InterPro" id="IPR051225">
    <property type="entry name" value="NAD(P)_epim/dehydratase"/>
</dbReference>
<dbReference type="PANTHER" id="PTHR42687">
    <property type="entry name" value="L-THREONINE 3-DEHYDROGENASE"/>
    <property type="match status" value="1"/>
</dbReference>
<dbReference type="PANTHER" id="PTHR42687:SF1">
    <property type="entry name" value="L-THREONINE 3-DEHYDROGENASE, MITOCHONDRIAL"/>
    <property type="match status" value="1"/>
</dbReference>
<dbReference type="Pfam" id="PF01370">
    <property type="entry name" value="Epimerase"/>
    <property type="match status" value="1"/>
</dbReference>
<dbReference type="SUPFAM" id="SSF51735">
    <property type="entry name" value="NAD(P)-binding Rossmann-fold domains"/>
    <property type="match status" value="1"/>
</dbReference>
<reference key="1">
    <citation type="journal article" date="2005" name="J. Bacteriol.">
        <title>Whole-genome sequencing of Staphylococcus haemolyticus uncovers the extreme plasticity of its genome and the evolution of human-colonizing staphylococcal species.</title>
        <authorList>
            <person name="Takeuchi F."/>
            <person name="Watanabe S."/>
            <person name="Baba T."/>
            <person name="Yuzawa H."/>
            <person name="Ito T."/>
            <person name="Morimoto Y."/>
            <person name="Kuroda M."/>
            <person name="Cui L."/>
            <person name="Takahashi M."/>
            <person name="Ankai A."/>
            <person name="Baba S."/>
            <person name="Fukui S."/>
            <person name="Lee J.C."/>
            <person name="Hiramatsu K."/>
        </authorList>
    </citation>
    <scope>NUCLEOTIDE SEQUENCE [LARGE SCALE GENOMIC DNA]</scope>
    <source>
        <strain>JCSC1435</strain>
    </source>
</reference>
<protein>
    <recommendedName>
        <fullName>Uncharacterized epimerase/dehydratase SH2450</fullName>
    </recommendedName>
</protein>
<organism>
    <name type="scientific">Staphylococcus haemolyticus (strain JCSC1435)</name>
    <dbReference type="NCBI Taxonomy" id="279808"/>
    <lineage>
        <taxon>Bacteria</taxon>
        <taxon>Bacillati</taxon>
        <taxon>Bacillota</taxon>
        <taxon>Bacilli</taxon>
        <taxon>Bacillales</taxon>
        <taxon>Staphylococcaceae</taxon>
        <taxon>Staphylococcus</taxon>
    </lineage>
</organism>
<gene>
    <name type="ordered locus">SH2450</name>
</gene>
<sequence length="318" mass="35770">MERIVITGALGQIGTELVLKCREIYGNDNVLATDIREPEEDSPVNNGPFEVLDVTNREAMMAIVENFKADTLMHMAALLSATAEKNPLLAWDLNMGGLMNALETARTYELHFFTPSSIGAFGDSTPKKDTPQNTIQQPTTMYGVNKVAGELLCQYYFTKFGVDTRSVRFPGLISHVKEPGGGTTDYAVEIYFEAVRKGRYTSYIAKDTYMDMMYMDDAIDAIIKLMEADSDKLVTRNGYNLSAMSFEPEQIKAEIQKHYPGFALDYEVDPVRQAIADSWPDNIDTSYSRKEWGFNPKYDLAGMTELMLKAIEEKEQNK</sequence>
<feature type="chain" id="PRO_0000270853" description="Uncharacterized epimerase/dehydratase SH2450">
    <location>
        <begin position="1"/>
        <end position="318"/>
    </location>
</feature>
<evidence type="ECO:0000305" key="1"/>
<comment type="similarity">
    <text evidence="1">Belongs to the NAD(P)-dependent epimerase/dehydratase family.</text>
</comment>
<accession>Q4L3L8</accession>
<proteinExistence type="inferred from homology"/>